<organism>
    <name type="scientific">Campylobacter jejuni subsp. doylei (strain ATCC BAA-1458 / RM4099 / 269.97)</name>
    <dbReference type="NCBI Taxonomy" id="360109"/>
    <lineage>
        <taxon>Bacteria</taxon>
        <taxon>Pseudomonadati</taxon>
        <taxon>Campylobacterota</taxon>
        <taxon>Epsilonproteobacteria</taxon>
        <taxon>Campylobacterales</taxon>
        <taxon>Campylobacteraceae</taxon>
        <taxon>Campylobacter</taxon>
    </lineage>
</organism>
<dbReference type="EC" id="6.3.5.3" evidence="1"/>
<dbReference type="EMBL" id="CP000768">
    <property type="protein sequence ID" value="ABS43770.1"/>
    <property type="molecule type" value="Genomic_DNA"/>
</dbReference>
<dbReference type="SMR" id="A7H373"/>
<dbReference type="KEGG" id="cjd:JJD26997_0826"/>
<dbReference type="HOGENOM" id="CLU_003100_0_1_7"/>
<dbReference type="UniPathway" id="UPA00074">
    <property type="reaction ID" value="UER00128"/>
</dbReference>
<dbReference type="Proteomes" id="UP000002302">
    <property type="component" value="Chromosome"/>
</dbReference>
<dbReference type="GO" id="GO:0005737">
    <property type="term" value="C:cytoplasm"/>
    <property type="evidence" value="ECO:0007669"/>
    <property type="project" value="UniProtKB-SubCell"/>
</dbReference>
<dbReference type="GO" id="GO:0005524">
    <property type="term" value="F:ATP binding"/>
    <property type="evidence" value="ECO:0007669"/>
    <property type="project" value="UniProtKB-UniRule"/>
</dbReference>
<dbReference type="GO" id="GO:0000287">
    <property type="term" value="F:magnesium ion binding"/>
    <property type="evidence" value="ECO:0007669"/>
    <property type="project" value="UniProtKB-UniRule"/>
</dbReference>
<dbReference type="GO" id="GO:0004642">
    <property type="term" value="F:phosphoribosylformylglycinamidine synthase activity"/>
    <property type="evidence" value="ECO:0007669"/>
    <property type="project" value="UniProtKB-UniRule"/>
</dbReference>
<dbReference type="GO" id="GO:0006189">
    <property type="term" value="P:'de novo' IMP biosynthetic process"/>
    <property type="evidence" value="ECO:0007669"/>
    <property type="project" value="UniProtKB-UniRule"/>
</dbReference>
<dbReference type="CDD" id="cd02203">
    <property type="entry name" value="PurL_repeat1"/>
    <property type="match status" value="1"/>
</dbReference>
<dbReference type="CDD" id="cd02204">
    <property type="entry name" value="PurL_repeat2"/>
    <property type="match status" value="1"/>
</dbReference>
<dbReference type="FunFam" id="3.30.1330.10:FF:000004">
    <property type="entry name" value="Phosphoribosylformylglycinamidine synthase subunit PurL"/>
    <property type="match status" value="1"/>
</dbReference>
<dbReference type="Gene3D" id="3.90.650.10">
    <property type="entry name" value="PurM-like C-terminal domain"/>
    <property type="match status" value="2"/>
</dbReference>
<dbReference type="Gene3D" id="3.30.1330.10">
    <property type="entry name" value="PurM-like, N-terminal domain"/>
    <property type="match status" value="2"/>
</dbReference>
<dbReference type="HAMAP" id="MF_00420">
    <property type="entry name" value="PurL_2"/>
    <property type="match status" value="1"/>
</dbReference>
<dbReference type="InterPro" id="IPR010074">
    <property type="entry name" value="PRibForGlyAmidine_synth_PurL"/>
</dbReference>
<dbReference type="InterPro" id="IPR041609">
    <property type="entry name" value="PurL_linker"/>
</dbReference>
<dbReference type="InterPro" id="IPR010918">
    <property type="entry name" value="PurM-like_C_dom"/>
</dbReference>
<dbReference type="InterPro" id="IPR036676">
    <property type="entry name" value="PurM-like_C_sf"/>
</dbReference>
<dbReference type="InterPro" id="IPR016188">
    <property type="entry name" value="PurM-like_N"/>
</dbReference>
<dbReference type="InterPro" id="IPR036921">
    <property type="entry name" value="PurM-like_N_sf"/>
</dbReference>
<dbReference type="NCBIfam" id="TIGR01736">
    <property type="entry name" value="FGAM_synth_II"/>
    <property type="match status" value="1"/>
</dbReference>
<dbReference type="NCBIfam" id="NF002290">
    <property type="entry name" value="PRK01213.1"/>
    <property type="match status" value="1"/>
</dbReference>
<dbReference type="PANTHER" id="PTHR43555">
    <property type="entry name" value="PHOSPHORIBOSYLFORMYLGLYCINAMIDINE SYNTHASE SUBUNIT PURL"/>
    <property type="match status" value="1"/>
</dbReference>
<dbReference type="PANTHER" id="PTHR43555:SF1">
    <property type="entry name" value="PHOSPHORIBOSYLFORMYLGLYCINAMIDINE SYNTHASE SUBUNIT PURL"/>
    <property type="match status" value="1"/>
</dbReference>
<dbReference type="Pfam" id="PF00586">
    <property type="entry name" value="AIRS"/>
    <property type="match status" value="2"/>
</dbReference>
<dbReference type="Pfam" id="PF02769">
    <property type="entry name" value="AIRS_C"/>
    <property type="match status" value="2"/>
</dbReference>
<dbReference type="Pfam" id="PF18072">
    <property type="entry name" value="FGAR-AT_linker"/>
    <property type="match status" value="1"/>
</dbReference>
<dbReference type="PIRSF" id="PIRSF001587">
    <property type="entry name" value="FGAM_synthase_II"/>
    <property type="match status" value="1"/>
</dbReference>
<dbReference type="SUPFAM" id="SSF56042">
    <property type="entry name" value="PurM C-terminal domain-like"/>
    <property type="match status" value="2"/>
</dbReference>
<dbReference type="SUPFAM" id="SSF55326">
    <property type="entry name" value="PurM N-terminal domain-like"/>
    <property type="match status" value="2"/>
</dbReference>
<evidence type="ECO:0000255" key="1">
    <source>
        <dbReference type="HAMAP-Rule" id="MF_00420"/>
    </source>
</evidence>
<comment type="function">
    <text evidence="1">Part of the phosphoribosylformylglycinamidine synthase complex involved in the purines biosynthetic pathway. Catalyzes the ATP-dependent conversion of formylglycinamide ribonucleotide (FGAR) and glutamine to yield formylglycinamidine ribonucleotide (FGAM) and glutamate. The FGAM synthase complex is composed of three subunits. PurQ produces an ammonia molecule by converting glutamine to glutamate. PurL transfers the ammonia molecule to FGAR to form FGAM in an ATP-dependent manner. PurS interacts with PurQ and PurL and is thought to assist in the transfer of the ammonia molecule from PurQ to PurL.</text>
</comment>
<comment type="catalytic activity">
    <reaction evidence="1">
        <text>N(2)-formyl-N(1)-(5-phospho-beta-D-ribosyl)glycinamide + L-glutamine + ATP + H2O = 2-formamido-N(1)-(5-O-phospho-beta-D-ribosyl)acetamidine + L-glutamate + ADP + phosphate + H(+)</text>
        <dbReference type="Rhea" id="RHEA:17129"/>
        <dbReference type="ChEBI" id="CHEBI:15377"/>
        <dbReference type="ChEBI" id="CHEBI:15378"/>
        <dbReference type="ChEBI" id="CHEBI:29985"/>
        <dbReference type="ChEBI" id="CHEBI:30616"/>
        <dbReference type="ChEBI" id="CHEBI:43474"/>
        <dbReference type="ChEBI" id="CHEBI:58359"/>
        <dbReference type="ChEBI" id="CHEBI:147286"/>
        <dbReference type="ChEBI" id="CHEBI:147287"/>
        <dbReference type="ChEBI" id="CHEBI:456216"/>
        <dbReference type="EC" id="6.3.5.3"/>
    </reaction>
</comment>
<comment type="pathway">
    <text evidence="1">Purine metabolism; IMP biosynthesis via de novo pathway; 5-amino-1-(5-phospho-D-ribosyl)imidazole from N(2)-formyl-N(1)-(5-phospho-D-ribosyl)glycinamide: step 1/2.</text>
</comment>
<comment type="subunit">
    <text evidence="1">Monomer. Part of the FGAM synthase complex composed of 1 PurL, 1 PurQ and 2 PurS subunits.</text>
</comment>
<comment type="subcellular location">
    <subcellularLocation>
        <location evidence="1">Cytoplasm</location>
    </subcellularLocation>
</comment>
<comment type="similarity">
    <text evidence="1">Belongs to the FGAMS family.</text>
</comment>
<accession>A7H373</accession>
<feature type="chain" id="PRO_1000050304" description="Phosphoribosylformylglycinamidine synthase subunit PurL">
    <location>
        <begin position="1"/>
        <end position="728"/>
    </location>
</feature>
<feature type="active site" evidence="1">
    <location>
        <position position="42"/>
    </location>
</feature>
<feature type="active site" description="Proton acceptor" evidence="1">
    <location>
        <position position="88"/>
    </location>
</feature>
<feature type="binding site" evidence="1">
    <location>
        <position position="45"/>
    </location>
    <ligand>
        <name>ATP</name>
        <dbReference type="ChEBI" id="CHEBI:30616"/>
    </ligand>
</feature>
<feature type="binding site" evidence="1">
    <location>
        <position position="84"/>
    </location>
    <ligand>
        <name>ATP</name>
        <dbReference type="ChEBI" id="CHEBI:30616"/>
    </ligand>
</feature>
<feature type="binding site" evidence="1">
    <location>
        <position position="86"/>
    </location>
    <ligand>
        <name>Mg(2+)</name>
        <dbReference type="ChEBI" id="CHEBI:18420"/>
        <label>1</label>
    </ligand>
</feature>
<feature type="binding site" evidence="1">
    <location>
        <begin position="87"/>
        <end position="90"/>
    </location>
    <ligand>
        <name>substrate</name>
    </ligand>
</feature>
<feature type="binding site" evidence="1">
    <location>
        <position position="109"/>
    </location>
    <ligand>
        <name>substrate</name>
    </ligand>
</feature>
<feature type="binding site" evidence="1">
    <location>
        <position position="110"/>
    </location>
    <ligand>
        <name>Mg(2+)</name>
        <dbReference type="ChEBI" id="CHEBI:18420"/>
        <label>2</label>
    </ligand>
</feature>
<feature type="binding site" evidence="1">
    <location>
        <position position="237"/>
    </location>
    <ligand>
        <name>substrate</name>
    </ligand>
</feature>
<feature type="binding site" evidence="1">
    <location>
        <position position="265"/>
    </location>
    <ligand>
        <name>Mg(2+)</name>
        <dbReference type="ChEBI" id="CHEBI:18420"/>
        <label>2</label>
    </ligand>
</feature>
<feature type="binding site" evidence="1">
    <location>
        <begin position="309"/>
        <end position="311"/>
    </location>
    <ligand>
        <name>substrate</name>
    </ligand>
</feature>
<feature type="binding site" evidence="1">
    <location>
        <position position="491"/>
    </location>
    <ligand>
        <name>ATP</name>
        <dbReference type="ChEBI" id="CHEBI:30616"/>
    </ligand>
</feature>
<feature type="binding site" evidence="1">
    <location>
        <position position="528"/>
    </location>
    <ligand>
        <name>ATP</name>
        <dbReference type="ChEBI" id="CHEBI:30616"/>
    </ligand>
</feature>
<feature type="binding site" evidence="1">
    <location>
        <position position="529"/>
    </location>
    <ligand>
        <name>Mg(2+)</name>
        <dbReference type="ChEBI" id="CHEBI:18420"/>
        <label>1</label>
    </ligand>
</feature>
<feature type="binding site" evidence="1">
    <location>
        <position position="531"/>
    </location>
    <ligand>
        <name>substrate</name>
    </ligand>
</feature>
<keyword id="KW-0067">ATP-binding</keyword>
<keyword id="KW-0963">Cytoplasm</keyword>
<keyword id="KW-0436">Ligase</keyword>
<keyword id="KW-0460">Magnesium</keyword>
<keyword id="KW-0479">Metal-binding</keyword>
<keyword id="KW-0547">Nucleotide-binding</keyword>
<keyword id="KW-0658">Purine biosynthesis</keyword>
<protein>
    <recommendedName>
        <fullName evidence="1">Phosphoribosylformylglycinamidine synthase subunit PurL</fullName>
        <shortName evidence="1">FGAM synthase</shortName>
        <ecNumber evidence="1">6.3.5.3</ecNumber>
    </recommendedName>
    <alternativeName>
        <fullName evidence="1">Formylglycinamide ribonucleotide amidotransferase subunit II</fullName>
        <shortName evidence="1">FGAR amidotransferase II</shortName>
        <shortName evidence="1">FGAR-AT II</shortName>
    </alternativeName>
    <alternativeName>
        <fullName evidence="1">Glutamine amidotransferase PurL</fullName>
    </alternativeName>
    <alternativeName>
        <fullName evidence="1">Phosphoribosylformylglycinamidine synthase subunit II</fullName>
    </alternativeName>
</protein>
<reference key="1">
    <citation type="submission" date="2007-07" db="EMBL/GenBank/DDBJ databases">
        <title>Complete genome sequence of Campylobacter jejuni subsp doylei 269.97 isolated from human blood.</title>
        <authorList>
            <person name="Fouts D.E."/>
            <person name="Mongodin E.F."/>
            <person name="Puiu D."/>
            <person name="Sebastian Y."/>
            <person name="Miller W.G."/>
            <person name="Mandrell R.E."/>
            <person name="Lastovica A.J."/>
            <person name="Nelson K.E."/>
        </authorList>
    </citation>
    <scope>NUCLEOTIDE SEQUENCE [LARGE SCALE GENOMIC DNA]</scope>
    <source>
        <strain>ATCC BAA-1458 / RM4099 / 269.97</strain>
    </source>
</reference>
<proteinExistence type="inferred from homology"/>
<sequence length="728" mass="79459">MDKETIKAHKISDEEYTQILEILGREPNLLELGVISAMWSEHCSYKSSKKYLNGFPTKAPWVIQGPGENAGVIDIGQGMSAVFKVESHNHPSFIEPFAGAATGVGGILRDVFTMGARVVAGLNSLKFGDIHNEKCGKHQKYLVKGVVNGISHYGNCMGVPTIGGECAFDECFNGNILVNAFALGICKSEDIFYAKAEGVGNPVIYVGSKTGRDGLGGAVMASDSFNEESKSLRPTVQIGDPFSEKLLMEACLELFKTDYIVGIQDMGAAGLTSSSFEMAGRSGSGMKLYLDKTPMRESGMTPYELMLSESQERMLICAKKGYEDKVIEIFKKWDLDAVVIGEVTNTEKMELFWHDELVGLIPIEPLSEKAPILNRPISEPKYLSEIKDYKFELKSSIQELFIQMLQNENINNKAFIYDQFDSSVQTNTIKADGKLGASVIRIKENGVSVAMAIECNSRLNYVNPKIGAALAVASAGRKVACTGAKPLAISDCLNYGNPQNPEVMWQFAQGCEGIKEACKELNTPVVSGNVSLYNETEGVSIYPSPTIVSVGVLEDANKTLKASFEKENLSVYLLGESLGEFGGSMVMKIQDKKVSGSLKELDYKAELALWDLLYKANQNSLLECANSVGIGGIAMTLAKMFAISSVGANLTSGFDDEKMIFDESASRAIVGLSKENEETFLTLTKEFGVKAYKLGVSTSQKHFKLDSIELNKAELDKLYFESFQEQIQ</sequence>
<name>PURL_CAMJD</name>
<gene>
    <name evidence="1" type="primary">purL</name>
    <name type="ordered locus">JJD26997_0826</name>
</gene>